<organism>
    <name type="scientific">Thioalkalivibrio sulfidiphilus (strain HL-EbGR7)</name>
    <dbReference type="NCBI Taxonomy" id="396588"/>
    <lineage>
        <taxon>Bacteria</taxon>
        <taxon>Pseudomonadati</taxon>
        <taxon>Pseudomonadota</taxon>
        <taxon>Gammaproteobacteria</taxon>
        <taxon>Chromatiales</taxon>
        <taxon>Ectothiorhodospiraceae</taxon>
        <taxon>Thioalkalivibrio</taxon>
    </lineage>
</organism>
<comment type="function">
    <text evidence="1">One of the early assembly proteins it binds 23S rRNA. One of the proteins that surrounds the polypeptide exit tunnel on the outside of the ribosome. Forms the main docking site for trigger factor binding to the ribosome.</text>
</comment>
<comment type="subunit">
    <text evidence="1">Part of the 50S ribosomal subunit. Contacts protein L29, and trigger factor when it is bound to the ribosome.</text>
</comment>
<comment type="similarity">
    <text evidence="1">Belongs to the universal ribosomal protein uL23 family.</text>
</comment>
<accession>B8GV56</accession>
<gene>
    <name evidence="1" type="primary">rplW</name>
    <name type="ordered locus">Tgr7_2322</name>
</gene>
<sequence>MNEERLLKVLVGPHVSEKATVLADAANQHVFKVAPDATRGEIKAAVEKFFEVQVSSVRVVNMKGKRKRFGRFEGRRNNWKKAYVTLAAGQDIALAGSE</sequence>
<name>RL23_THISH</name>
<dbReference type="EMBL" id="CP001339">
    <property type="protein sequence ID" value="ACL73402.1"/>
    <property type="molecule type" value="Genomic_DNA"/>
</dbReference>
<dbReference type="RefSeq" id="WP_012638878.1">
    <property type="nucleotide sequence ID" value="NC_011901.1"/>
</dbReference>
<dbReference type="SMR" id="B8GV56"/>
<dbReference type="STRING" id="396588.Tgr7_2322"/>
<dbReference type="KEGG" id="tgr:Tgr7_2322"/>
<dbReference type="eggNOG" id="COG0089">
    <property type="taxonomic scope" value="Bacteria"/>
</dbReference>
<dbReference type="HOGENOM" id="CLU_037562_3_1_6"/>
<dbReference type="OrthoDB" id="9793353at2"/>
<dbReference type="Proteomes" id="UP000002383">
    <property type="component" value="Chromosome"/>
</dbReference>
<dbReference type="GO" id="GO:1990904">
    <property type="term" value="C:ribonucleoprotein complex"/>
    <property type="evidence" value="ECO:0007669"/>
    <property type="project" value="UniProtKB-KW"/>
</dbReference>
<dbReference type="GO" id="GO:0005840">
    <property type="term" value="C:ribosome"/>
    <property type="evidence" value="ECO:0007669"/>
    <property type="project" value="UniProtKB-KW"/>
</dbReference>
<dbReference type="GO" id="GO:0019843">
    <property type="term" value="F:rRNA binding"/>
    <property type="evidence" value="ECO:0007669"/>
    <property type="project" value="UniProtKB-UniRule"/>
</dbReference>
<dbReference type="GO" id="GO:0003735">
    <property type="term" value="F:structural constituent of ribosome"/>
    <property type="evidence" value="ECO:0007669"/>
    <property type="project" value="InterPro"/>
</dbReference>
<dbReference type="GO" id="GO:0006412">
    <property type="term" value="P:translation"/>
    <property type="evidence" value="ECO:0007669"/>
    <property type="project" value="UniProtKB-UniRule"/>
</dbReference>
<dbReference type="FunFam" id="3.30.70.330:FF:000001">
    <property type="entry name" value="50S ribosomal protein L23"/>
    <property type="match status" value="1"/>
</dbReference>
<dbReference type="Gene3D" id="3.30.70.330">
    <property type="match status" value="1"/>
</dbReference>
<dbReference type="HAMAP" id="MF_01369_B">
    <property type="entry name" value="Ribosomal_uL23_B"/>
    <property type="match status" value="1"/>
</dbReference>
<dbReference type="InterPro" id="IPR012677">
    <property type="entry name" value="Nucleotide-bd_a/b_plait_sf"/>
</dbReference>
<dbReference type="InterPro" id="IPR013025">
    <property type="entry name" value="Ribosomal_uL23-like"/>
</dbReference>
<dbReference type="InterPro" id="IPR012678">
    <property type="entry name" value="Ribosomal_uL23/eL15/eS24_sf"/>
</dbReference>
<dbReference type="NCBIfam" id="NF004359">
    <property type="entry name" value="PRK05738.1-3"/>
    <property type="match status" value="1"/>
</dbReference>
<dbReference type="NCBIfam" id="NF004363">
    <property type="entry name" value="PRK05738.2-4"/>
    <property type="match status" value="1"/>
</dbReference>
<dbReference type="PANTHER" id="PTHR11620">
    <property type="entry name" value="60S RIBOSOMAL PROTEIN L23A"/>
    <property type="match status" value="1"/>
</dbReference>
<dbReference type="Pfam" id="PF00276">
    <property type="entry name" value="Ribosomal_L23"/>
    <property type="match status" value="1"/>
</dbReference>
<dbReference type="SUPFAM" id="SSF54189">
    <property type="entry name" value="Ribosomal proteins S24e, L23 and L15e"/>
    <property type="match status" value="1"/>
</dbReference>
<keyword id="KW-1185">Reference proteome</keyword>
<keyword id="KW-0687">Ribonucleoprotein</keyword>
<keyword id="KW-0689">Ribosomal protein</keyword>
<keyword id="KW-0694">RNA-binding</keyword>
<keyword id="KW-0699">rRNA-binding</keyword>
<reference key="1">
    <citation type="journal article" date="2011" name="Stand. Genomic Sci.">
        <title>Complete genome sequence of 'Thioalkalivibrio sulfidophilus' HL-EbGr7.</title>
        <authorList>
            <person name="Muyzer G."/>
            <person name="Sorokin D.Y."/>
            <person name="Mavromatis K."/>
            <person name="Lapidus A."/>
            <person name="Clum A."/>
            <person name="Ivanova N."/>
            <person name="Pati A."/>
            <person name="d'Haeseleer P."/>
            <person name="Woyke T."/>
            <person name="Kyrpides N.C."/>
        </authorList>
    </citation>
    <scope>NUCLEOTIDE SEQUENCE [LARGE SCALE GENOMIC DNA]</scope>
    <source>
        <strain>HL-EbGR7</strain>
    </source>
</reference>
<evidence type="ECO:0000255" key="1">
    <source>
        <dbReference type="HAMAP-Rule" id="MF_01369"/>
    </source>
</evidence>
<evidence type="ECO:0000305" key="2"/>
<feature type="chain" id="PRO_1000184112" description="Large ribosomal subunit protein uL23">
    <location>
        <begin position="1"/>
        <end position="98"/>
    </location>
</feature>
<proteinExistence type="inferred from homology"/>
<protein>
    <recommendedName>
        <fullName evidence="1">Large ribosomal subunit protein uL23</fullName>
    </recommendedName>
    <alternativeName>
        <fullName evidence="2">50S ribosomal protein L23</fullName>
    </alternativeName>
</protein>